<comment type="function">
    <text evidence="1">ATP-dependent RNA helicase which is a subunit of the eIF4F complex involved in cap recognition and is required for mRNA binding to ribosome. In the current model of translation initiation, eIF4A unwinds RNA secondary structures in the 5'-UTR of mRNAs which is necessary to allow efficient binding of the small ribosomal subunit, and subsequent scanning for the initiator codon (By similarity).</text>
</comment>
<comment type="catalytic activity">
    <reaction>
        <text>ATP + H2O = ADP + phosphate + H(+)</text>
        <dbReference type="Rhea" id="RHEA:13065"/>
        <dbReference type="ChEBI" id="CHEBI:15377"/>
        <dbReference type="ChEBI" id="CHEBI:15378"/>
        <dbReference type="ChEBI" id="CHEBI:30616"/>
        <dbReference type="ChEBI" id="CHEBI:43474"/>
        <dbReference type="ChEBI" id="CHEBI:456216"/>
        <dbReference type="EC" id="3.6.4.13"/>
    </reaction>
</comment>
<comment type="subunit">
    <text evidence="1">Component of the eIF4F complex, which composition varies with external and internal environmental conditions. It is composed of at least eIF4A, eIF4E and eIF4G (By similarity).</text>
</comment>
<comment type="subcellular location">
    <subcellularLocation>
        <location evidence="1">Cytoplasm</location>
    </subcellularLocation>
</comment>
<comment type="domain">
    <text>The Q motif is unique to and characteristic of the DEAD box family of RNA helicases and controls ATP binding and hydrolysis.</text>
</comment>
<comment type="similarity">
    <text evidence="4">Belongs to the DEAD box helicase family. eIF4A subfamily.</text>
</comment>
<evidence type="ECO:0000250" key="1"/>
<evidence type="ECO:0000255" key="2">
    <source>
        <dbReference type="PROSITE-ProRule" id="PRU00541"/>
    </source>
</evidence>
<evidence type="ECO:0000255" key="3">
    <source>
        <dbReference type="PROSITE-ProRule" id="PRU00542"/>
    </source>
</evidence>
<evidence type="ECO:0000305" key="4"/>
<protein>
    <recommendedName>
        <fullName>ATP-dependent RNA helicase eIF4A</fullName>
        <ecNumber>3.6.4.13</ecNumber>
    </recommendedName>
    <alternativeName>
        <fullName>Eukaryotic initiation factor 4A</fullName>
        <shortName>eIF-4A</shortName>
    </alternativeName>
    <alternativeName>
        <fullName>Translation initiation factor 1</fullName>
    </alternativeName>
</protein>
<reference key="1">
    <citation type="journal article" date="2004" name="Nature">
        <title>Genome evolution in yeasts.</title>
        <authorList>
            <person name="Dujon B."/>
            <person name="Sherman D."/>
            <person name="Fischer G."/>
            <person name="Durrens P."/>
            <person name="Casaregola S."/>
            <person name="Lafontaine I."/>
            <person name="de Montigny J."/>
            <person name="Marck C."/>
            <person name="Neuveglise C."/>
            <person name="Talla E."/>
            <person name="Goffard N."/>
            <person name="Frangeul L."/>
            <person name="Aigle M."/>
            <person name="Anthouard V."/>
            <person name="Babour A."/>
            <person name="Barbe V."/>
            <person name="Barnay S."/>
            <person name="Blanchin S."/>
            <person name="Beckerich J.-M."/>
            <person name="Beyne E."/>
            <person name="Bleykasten C."/>
            <person name="Boisrame A."/>
            <person name="Boyer J."/>
            <person name="Cattolico L."/>
            <person name="Confanioleri F."/>
            <person name="de Daruvar A."/>
            <person name="Despons L."/>
            <person name="Fabre E."/>
            <person name="Fairhead C."/>
            <person name="Ferry-Dumazet H."/>
            <person name="Groppi A."/>
            <person name="Hantraye F."/>
            <person name="Hennequin C."/>
            <person name="Jauniaux N."/>
            <person name="Joyet P."/>
            <person name="Kachouri R."/>
            <person name="Kerrest A."/>
            <person name="Koszul R."/>
            <person name="Lemaire M."/>
            <person name="Lesur I."/>
            <person name="Ma L."/>
            <person name="Muller H."/>
            <person name="Nicaud J.-M."/>
            <person name="Nikolski M."/>
            <person name="Oztas S."/>
            <person name="Ozier-Kalogeropoulos O."/>
            <person name="Pellenz S."/>
            <person name="Potier S."/>
            <person name="Richard G.-F."/>
            <person name="Straub M.-L."/>
            <person name="Suleau A."/>
            <person name="Swennen D."/>
            <person name="Tekaia F."/>
            <person name="Wesolowski-Louvel M."/>
            <person name="Westhof E."/>
            <person name="Wirth B."/>
            <person name="Zeniou-Meyer M."/>
            <person name="Zivanovic Y."/>
            <person name="Bolotin-Fukuhara M."/>
            <person name="Thierry A."/>
            <person name="Bouchier C."/>
            <person name="Caudron B."/>
            <person name="Scarpelli C."/>
            <person name="Gaillardin C."/>
            <person name="Weissenbach J."/>
            <person name="Wincker P."/>
            <person name="Souciet J.-L."/>
        </authorList>
    </citation>
    <scope>NUCLEOTIDE SEQUENCE [LARGE SCALE GENOMIC DNA]</scope>
    <source>
        <strain>CLIB 122 / E 150</strain>
    </source>
</reference>
<dbReference type="EC" id="3.6.4.13"/>
<dbReference type="EMBL" id="CR382128">
    <property type="protein sequence ID" value="CAG83411.1"/>
    <property type="molecule type" value="Genomic_DNA"/>
</dbReference>
<dbReference type="RefSeq" id="XP_501158.1">
    <property type="nucleotide sequence ID" value="XM_501158.1"/>
</dbReference>
<dbReference type="SMR" id="Q6CDV4"/>
<dbReference type="FunCoup" id="Q6CDV4">
    <property type="interactions" value="1311"/>
</dbReference>
<dbReference type="STRING" id="284591.Q6CDV4"/>
<dbReference type="EnsemblFungi" id="CAG83411">
    <property type="protein sequence ID" value="CAG83411"/>
    <property type="gene ID" value="YALI0_B20922g"/>
</dbReference>
<dbReference type="KEGG" id="yli:2907062"/>
<dbReference type="VEuPathDB" id="FungiDB:YALI0_B20922g"/>
<dbReference type="HOGENOM" id="CLU_003041_1_0_1"/>
<dbReference type="InParanoid" id="Q6CDV4"/>
<dbReference type="OMA" id="FGCQALV"/>
<dbReference type="OrthoDB" id="79528at4891"/>
<dbReference type="Proteomes" id="UP000001300">
    <property type="component" value="Chromosome B"/>
</dbReference>
<dbReference type="GO" id="GO:0010494">
    <property type="term" value="C:cytoplasmic stress granule"/>
    <property type="evidence" value="ECO:0000318"/>
    <property type="project" value="GO_Central"/>
</dbReference>
<dbReference type="GO" id="GO:0005524">
    <property type="term" value="F:ATP binding"/>
    <property type="evidence" value="ECO:0007669"/>
    <property type="project" value="UniProtKB-KW"/>
</dbReference>
<dbReference type="GO" id="GO:0016887">
    <property type="term" value="F:ATP hydrolysis activity"/>
    <property type="evidence" value="ECO:0007669"/>
    <property type="project" value="RHEA"/>
</dbReference>
<dbReference type="GO" id="GO:0003723">
    <property type="term" value="F:RNA binding"/>
    <property type="evidence" value="ECO:0007669"/>
    <property type="project" value="UniProtKB-KW"/>
</dbReference>
<dbReference type="GO" id="GO:0003724">
    <property type="term" value="F:RNA helicase activity"/>
    <property type="evidence" value="ECO:0007669"/>
    <property type="project" value="UniProtKB-EC"/>
</dbReference>
<dbReference type="GO" id="GO:0003743">
    <property type="term" value="F:translation initiation factor activity"/>
    <property type="evidence" value="ECO:0000318"/>
    <property type="project" value="GO_Central"/>
</dbReference>
<dbReference type="GO" id="GO:0002183">
    <property type="term" value="P:cytoplasmic translational initiation"/>
    <property type="evidence" value="ECO:0000318"/>
    <property type="project" value="GO_Central"/>
</dbReference>
<dbReference type="CDD" id="cd18787">
    <property type="entry name" value="SF2_C_DEAD"/>
    <property type="match status" value="1"/>
</dbReference>
<dbReference type="FunFam" id="3.40.50.300:FF:000089">
    <property type="entry name" value="Eukaryotic initiation factor 4A-II"/>
    <property type="match status" value="1"/>
</dbReference>
<dbReference type="FunFam" id="3.40.50.300:FF:000031">
    <property type="entry name" value="Eukaryotic initiation factor 4A-III"/>
    <property type="match status" value="1"/>
</dbReference>
<dbReference type="Gene3D" id="3.40.50.300">
    <property type="entry name" value="P-loop containing nucleotide triphosphate hydrolases"/>
    <property type="match status" value="2"/>
</dbReference>
<dbReference type="InterPro" id="IPR011545">
    <property type="entry name" value="DEAD/DEAH_box_helicase_dom"/>
</dbReference>
<dbReference type="InterPro" id="IPR014001">
    <property type="entry name" value="Helicase_ATP-bd"/>
</dbReference>
<dbReference type="InterPro" id="IPR001650">
    <property type="entry name" value="Helicase_C-like"/>
</dbReference>
<dbReference type="InterPro" id="IPR027417">
    <property type="entry name" value="P-loop_NTPase"/>
</dbReference>
<dbReference type="InterPro" id="IPR000629">
    <property type="entry name" value="RNA-helicase_DEAD-box_CS"/>
</dbReference>
<dbReference type="InterPro" id="IPR014014">
    <property type="entry name" value="RNA_helicase_DEAD_Q_motif"/>
</dbReference>
<dbReference type="PANTHER" id="PTHR47958">
    <property type="entry name" value="ATP-DEPENDENT RNA HELICASE DBP3"/>
    <property type="match status" value="1"/>
</dbReference>
<dbReference type="Pfam" id="PF00270">
    <property type="entry name" value="DEAD"/>
    <property type="match status" value="1"/>
</dbReference>
<dbReference type="Pfam" id="PF00271">
    <property type="entry name" value="Helicase_C"/>
    <property type="match status" value="1"/>
</dbReference>
<dbReference type="SMART" id="SM00487">
    <property type="entry name" value="DEXDc"/>
    <property type="match status" value="1"/>
</dbReference>
<dbReference type="SMART" id="SM00490">
    <property type="entry name" value="HELICc"/>
    <property type="match status" value="1"/>
</dbReference>
<dbReference type="SUPFAM" id="SSF52540">
    <property type="entry name" value="P-loop containing nucleoside triphosphate hydrolases"/>
    <property type="match status" value="1"/>
</dbReference>
<dbReference type="PROSITE" id="PS00039">
    <property type="entry name" value="DEAD_ATP_HELICASE"/>
    <property type="match status" value="1"/>
</dbReference>
<dbReference type="PROSITE" id="PS51192">
    <property type="entry name" value="HELICASE_ATP_BIND_1"/>
    <property type="match status" value="1"/>
</dbReference>
<dbReference type="PROSITE" id="PS51194">
    <property type="entry name" value="HELICASE_CTER"/>
    <property type="match status" value="1"/>
</dbReference>
<dbReference type="PROSITE" id="PS51195">
    <property type="entry name" value="Q_MOTIF"/>
    <property type="match status" value="1"/>
</dbReference>
<accession>Q6CDV4</accession>
<feature type="chain" id="PRO_0000232140" description="ATP-dependent RNA helicase eIF4A">
    <location>
        <begin position="1"/>
        <end position="395"/>
    </location>
</feature>
<feature type="domain" description="Helicase ATP-binding" evidence="2">
    <location>
        <begin position="53"/>
        <end position="223"/>
    </location>
</feature>
<feature type="domain" description="Helicase C-terminal" evidence="3">
    <location>
        <begin position="234"/>
        <end position="395"/>
    </location>
</feature>
<feature type="short sequence motif" description="Q motif">
    <location>
        <begin position="22"/>
        <end position="50"/>
    </location>
</feature>
<feature type="short sequence motif" description="DEAD box">
    <location>
        <begin position="171"/>
        <end position="174"/>
    </location>
</feature>
<feature type="binding site" evidence="2">
    <location>
        <begin position="66"/>
        <end position="73"/>
    </location>
    <ligand>
        <name>ATP</name>
        <dbReference type="ChEBI" id="CHEBI:30616"/>
    </ligand>
</feature>
<organism>
    <name type="scientific">Yarrowia lipolytica (strain CLIB 122 / E 150)</name>
    <name type="common">Yeast</name>
    <name type="synonym">Candida lipolytica</name>
    <dbReference type="NCBI Taxonomy" id="284591"/>
    <lineage>
        <taxon>Eukaryota</taxon>
        <taxon>Fungi</taxon>
        <taxon>Dikarya</taxon>
        <taxon>Ascomycota</taxon>
        <taxon>Saccharomycotina</taxon>
        <taxon>Dipodascomycetes</taxon>
        <taxon>Dipodascales</taxon>
        <taxon>Dipodascales incertae sedis</taxon>
        <taxon>Yarrowia</taxon>
    </lineage>
</organism>
<name>IF4A_YARLI</name>
<gene>
    <name type="primary">TIF1</name>
    <name type="synonym">TIF41</name>
    <name type="ordered locus">YALI0B20922g</name>
</gene>
<keyword id="KW-0067">ATP-binding</keyword>
<keyword id="KW-0963">Cytoplasm</keyword>
<keyword id="KW-0347">Helicase</keyword>
<keyword id="KW-0378">Hydrolase</keyword>
<keyword id="KW-0396">Initiation factor</keyword>
<keyword id="KW-0547">Nucleotide-binding</keyword>
<keyword id="KW-0648">Protein biosynthesis</keyword>
<keyword id="KW-1185">Reference proteome</keyword>
<keyword id="KW-0694">RNA-binding</keyword>
<proteinExistence type="inferred from homology"/>
<sequence>MADGLTDIDSSQITTNYDEVVTSFDDLGLKDELLRGIYGYGFENPSSIQQRAILPVIKGNDVLAQAQSGTGKTATFSISALQNIDEKIKKPQALIIAPTRELAHQIQKVVLAFGEYMKIECHACIGGTSVAEDIRVIQEGVHVIVGTPGRIHDMIERRILKTDLIKMFILDEADEMLSREFKDPIYDIFTTLPETTQTVLLSATMPAEVLDITGKFMRDPVRILVKKDELTLEGIKQFYIDVEQESYKFEVLCDLYETINVSQAVIFCNTRRKVDYLTQALTEADFTVSSMHGETEQSQRDVIMKAFRTGSSRILITTDLLARGIDVQQVSLVINFDLPSNRENYIHRIGRGGRFGRKGVAINFVTSEDHGMLKELERFYSTEIVEMPTNIADLI</sequence>